<name>HEM1_BACAN</name>
<accession>Q81LC5</accession>
<accession>Q6HSS8</accession>
<accession>Q6KM21</accession>
<dbReference type="EC" id="1.2.1.70" evidence="1"/>
<dbReference type="EMBL" id="AE016879">
    <property type="protein sequence ID" value="AAP28397.1"/>
    <property type="molecule type" value="Genomic_DNA"/>
</dbReference>
<dbReference type="EMBL" id="AE017334">
    <property type="protein sequence ID" value="AAT33821.1"/>
    <property type="molecule type" value="Genomic_DNA"/>
</dbReference>
<dbReference type="EMBL" id="AE017225">
    <property type="protein sequence ID" value="AAT56661.1"/>
    <property type="molecule type" value="Genomic_DNA"/>
</dbReference>
<dbReference type="RefSeq" id="NP_846911.1">
    <property type="nucleotide sequence ID" value="NC_003997.3"/>
</dbReference>
<dbReference type="RefSeq" id="WP_000547860.1">
    <property type="nucleotide sequence ID" value="NZ_WXXJ01000027.1"/>
</dbReference>
<dbReference type="RefSeq" id="YP_030610.1">
    <property type="nucleotide sequence ID" value="NC_005945.1"/>
</dbReference>
<dbReference type="SMR" id="Q81LC5"/>
<dbReference type="IntAct" id="Q81LC5">
    <property type="interactions" value="6"/>
</dbReference>
<dbReference type="STRING" id="261594.GBAA_4698"/>
<dbReference type="DNASU" id="1083700"/>
<dbReference type="GeneID" id="45024338"/>
<dbReference type="KEGG" id="ban:BA_4698"/>
<dbReference type="KEGG" id="banh:HYU01_22910"/>
<dbReference type="KEGG" id="bar:GBAA_4698"/>
<dbReference type="KEGG" id="bat:BAS4363"/>
<dbReference type="PATRIC" id="fig|198094.11.peg.4663"/>
<dbReference type="eggNOG" id="COG0373">
    <property type="taxonomic scope" value="Bacteria"/>
</dbReference>
<dbReference type="HOGENOM" id="CLU_035113_2_2_9"/>
<dbReference type="OMA" id="FAFKCAA"/>
<dbReference type="OrthoDB" id="110209at2"/>
<dbReference type="UniPathway" id="UPA00251">
    <property type="reaction ID" value="UER00316"/>
</dbReference>
<dbReference type="Proteomes" id="UP000000427">
    <property type="component" value="Chromosome"/>
</dbReference>
<dbReference type="Proteomes" id="UP000000594">
    <property type="component" value="Chromosome"/>
</dbReference>
<dbReference type="GO" id="GO:0008883">
    <property type="term" value="F:glutamyl-tRNA reductase activity"/>
    <property type="evidence" value="ECO:0007669"/>
    <property type="project" value="UniProtKB-UniRule"/>
</dbReference>
<dbReference type="GO" id="GO:0050661">
    <property type="term" value="F:NADP binding"/>
    <property type="evidence" value="ECO:0007669"/>
    <property type="project" value="InterPro"/>
</dbReference>
<dbReference type="GO" id="GO:0006782">
    <property type="term" value="P:protoporphyrinogen IX biosynthetic process"/>
    <property type="evidence" value="ECO:0007669"/>
    <property type="project" value="UniProtKB-UniRule"/>
</dbReference>
<dbReference type="CDD" id="cd05213">
    <property type="entry name" value="NAD_bind_Glutamyl_tRNA_reduct"/>
    <property type="match status" value="1"/>
</dbReference>
<dbReference type="FunFam" id="3.30.460.30:FF:000001">
    <property type="entry name" value="Glutamyl-tRNA reductase"/>
    <property type="match status" value="1"/>
</dbReference>
<dbReference type="FunFam" id="3.40.50.720:FF:000031">
    <property type="entry name" value="Glutamyl-tRNA reductase"/>
    <property type="match status" value="1"/>
</dbReference>
<dbReference type="Gene3D" id="3.30.460.30">
    <property type="entry name" value="Glutamyl-tRNA reductase, N-terminal domain"/>
    <property type="match status" value="1"/>
</dbReference>
<dbReference type="Gene3D" id="3.40.50.720">
    <property type="entry name" value="NAD(P)-binding Rossmann-like Domain"/>
    <property type="match status" value="1"/>
</dbReference>
<dbReference type="HAMAP" id="MF_00087">
    <property type="entry name" value="Glu_tRNA_reductase"/>
    <property type="match status" value="1"/>
</dbReference>
<dbReference type="InterPro" id="IPR000343">
    <property type="entry name" value="4pyrrol_synth_GluRdtase"/>
</dbReference>
<dbReference type="InterPro" id="IPR015896">
    <property type="entry name" value="4pyrrol_synth_GluRdtase_dimer"/>
</dbReference>
<dbReference type="InterPro" id="IPR015895">
    <property type="entry name" value="4pyrrol_synth_GluRdtase_N"/>
</dbReference>
<dbReference type="InterPro" id="IPR018214">
    <property type="entry name" value="GluRdtase_CS"/>
</dbReference>
<dbReference type="InterPro" id="IPR036453">
    <property type="entry name" value="GluRdtase_dimer_dom_sf"/>
</dbReference>
<dbReference type="InterPro" id="IPR036343">
    <property type="entry name" value="GluRdtase_N_sf"/>
</dbReference>
<dbReference type="InterPro" id="IPR036291">
    <property type="entry name" value="NAD(P)-bd_dom_sf"/>
</dbReference>
<dbReference type="InterPro" id="IPR006151">
    <property type="entry name" value="Shikm_DH/Glu-tRNA_Rdtase"/>
</dbReference>
<dbReference type="NCBIfam" id="TIGR01035">
    <property type="entry name" value="hemA"/>
    <property type="match status" value="1"/>
</dbReference>
<dbReference type="PANTHER" id="PTHR43120">
    <property type="entry name" value="GLUTAMYL-TRNA REDUCTASE 1, CHLOROPLASTIC"/>
    <property type="match status" value="1"/>
</dbReference>
<dbReference type="PANTHER" id="PTHR43120:SF1">
    <property type="entry name" value="GLUTAMYL-TRNA REDUCTASE 1, CHLOROPLASTIC"/>
    <property type="match status" value="1"/>
</dbReference>
<dbReference type="Pfam" id="PF00745">
    <property type="entry name" value="GlutR_dimer"/>
    <property type="match status" value="1"/>
</dbReference>
<dbReference type="Pfam" id="PF05201">
    <property type="entry name" value="GlutR_N"/>
    <property type="match status" value="1"/>
</dbReference>
<dbReference type="Pfam" id="PF01488">
    <property type="entry name" value="Shikimate_DH"/>
    <property type="match status" value="1"/>
</dbReference>
<dbReference type="PIRSF" id="PIRSF000445">
    <property type="entry name" value="4pyrrol_synth_GluRdtase"/>
    <property type="match status" value="1"/>
</dbReference>
<dbReference type="SUPFAM" id="SSF69742">
    <property type="entry name" value="Glutamyl tRNA-reductase catalytic, N-terminal domain"/>
    <property type="match status" value="1"/>
</dbReference>
<dbReference type="SUPFAM" id="SSF69075">
    <property type="entry name" value="Glutamyl tRNA-reductase dimerization domain"/>
    <property type="match status" value="1"/>
</dbReference>
<dbReference type="SUPFAM" id="SSF51735">
    <property type="entry name" value="NAD(P)-binding Rossmann-fold domains"/>
    <property type="match status" value="1"/>
</dbReference>
<dbReference type="PROSITE" id="PS00747">
    <property type="entry name" value="GLUTR"/>
    <property type="match status" value="1"/>
</dbReference>
<proteinExistence type="inferred from homology"/>
<gene>
    <name evidence="1" type="primary">hemA</name>
    <name type="ordered locus">BA_4698</name>
    <name type="ordered locus">GBAA_4698</name>
    <name type="ordered locus">BAS4363</name>
</gene>
<protein>
    <recommendedName>
        <fullName evidence="1">Glutamyl-tRNA reductase</fullName>
        <shortName evidence="1">GluTR</shortName>
        <ecNumber evidence="1">1.2.1.70</ecNumber>
    </recommendedName>
</protein>
<evidence type="ECO:0000255" key="1">
    <source>
        <dbReference type="HAMAP-Rule" id="MF_00087"/>
    </source>
</evidence>
<sequence length="444" mass="49825">MHILVVSVNYRTAPVEFREKLTFQAAELERAMTTLQNQKSVLENVIVSTCNRTEIYAVVDQLHTGRYYIKKFLADWFQLEIEEVAPYLTIFEQDGAIDHLFRVTCGLDSMVVGETQILGQIKDSFLEAQQVKATGTIFNELFKQVITLAKRAHSETTIGESAMSVSYAAVELGKKIFGELTDCHVLILGAGKMGELALQNLYGSGARKVTVMNRTLSKAEIMAEKYMGHAKPLSELQCALLEADILISSTGASDYVITKEMMTKVEKMRSGRPLFMVDIAVPRDIDPAIDELEGSFLYDIDDLQGVVEANRAERLKEAEKIQFMIEEEIVLFKTWLSTLGVVPLISALRDKALAIQSETMESLERKIPNLSDRERKVISKHTKSIINQLLKDPILVAKEIAAEEGADEKLALFAKIFDLEMEDVESRAEEVEHKRVWTPSVPSL</sequence>
<organism>
    <name type="scientific">Bacillus anthracis</name>
    <dbReference type="NCBI Taxonomy" id="1392"/>
    <lineage>
        <taxon>Bacteria</taxon>
        <taxon>Bacillati</taxon>
        <taxon>Bacillota</taxon>
        <taxon>Bacilli</taxon>
        <taxon>Bacillales</taxon>
        <taxon>Bacillaceae</taxon>
        <taxon>Bacillus</taxon>
        <taxon>Bacillus cereus group</taxon>
    </lineage>
</organism>
<reference key="1">
    <citation type="journal article" date="2003" name="Nature">
        <title>The genome sequence of Bacillus anthracis Ames and comparison to closely related bacteria.</title>
        <authorList>
            <person name="Read T.D."/>
            <person name="Peterson S.N."/>
            <person name="Tourasse N.J."/>
            <person name="Baillie L.W."/>
            <person name="Paulsen I.T."/>
            <person name="Nelson K.E."/>
            <person name="Tettelin H."/>
            <person name="Fouts D.E."/>
            <person name="Eisen J.A."/>
            <person name="Gill S.R."/>
            <person name="Holtzapple E.K."/>
            <person name="Okstad O.A."/>
            <person name="Helgason E."/>
            <person name="Rilstone J."/>
            <person name="Wu M."/>
            <person name="Kolonay J.F."/>
            <person name="Beanan M.J."/>
            <person name="Dodson R.J."/>
            <person name="Brinkac L.M."/>
            <person name="Gwinn M.L."/>
            <person name="DeBoy R.T."/>
            <person name="Madpu R."/>
            <person name="Daugherty S.C."/>
            <person name="Durkin A.S."/>
            <person name="Haft D.H."/>
            <person name="Nelson W.C."/>
            <person name="Peterson J.D."/>
            <person name="Pop M."/>
            <person name="Khouri H.M."/>
            <person name="Radune D."/>
            <person name="Benton J.L."/>
            <person name="Mahamoud Y."/>
            <person name="Jiang L."/>
            <person name="Hance I.R."/>
            <person name="Weidman J.F."/>
            <person name="Berry K.J."/>
            <person name="Plaut R.D."/>
            <person name="Wolf A.M."/>
            <person name="Watkins K.L."/>
            <person name="Nierman W.C."/>
            <person name="Hazen A."/>
            <person name="Cline R.T."/>
            <person name="Redmond C."/>
            <person name="Thwaite J.E."/>
            <person name="White O."/>
            <person name="Salzberg S.L."/>
            <person name="Thomason B."/>
            <person name="Friedlander A.M."/>
            <person name="Koehler T.M."/>
            <person name="Hanna P.C."/>
            <person name="Kolstoe A.-B."/>
            <person name="Fraser C.M."/>
        </authorList>
    </citation>
    <scope>NUCLEOTIDE SEQUENCE [LARGE SCALE GENOMIC DNA]</scope>
    <source>
        <strain>Ames / isolate Porton</strain>
    </source>
</reference>
<reference key="2">
    <citation type="journal article" date="2009" name="J. Bacteriol.">
        <title>The complete genome sequence of Bacillus anthracis Ames 'Ancestor'.</title>
        <authorList>
            <person name="Ravel J."/>
            <person name="Jiang L."/>
            <person name="Stanley S.T."/>
            <person name="Wilson M.R."/>
            <person name="Decker R.S."/>
            <person name="Read T.D."/>
            <person name="Worsham P."/>
            <person name="Keim P.S."/>
            <person name="Salzberg S.L."/>
            <person name="Fraser-Liggett C.M."/>
            <person name="Rasko D.A."/>
        </authorList>
    </citation>
    <scope>NUCLEOTIDE SEQUENCE [LARGE SCALE GENOMIC DNA]</scope>
    <source>
        <strain>Ames ancestor</strain>
    </source>
</reference>
<reference key="3">
    <citation type="submission" date="2004-01" db="EMBL/GenBank/DDBJ databases">
        <title>Complete genome sequence of Bacillus anthracis Sterne.</title>
        <authorList>
            <person name="Brettin T.S."/>
            <person name="Bruce D."/>
            <person name="Challacombe J.F."/>
            <person name="Gilna P."/>
            <person name="Han C."/>
            <person name="Hill K."/>
            <person name="Hitchcock P."/>
            <person name="Jackson P."/>
            <person name="Keim P."/>
            <person name="Longmire J."/>
            <person name="Lucas S."/>
            <person name="Okinaka R."/>
            <person name="Richardson P."/>
            <person name="Rubin E."/>
            <person name="Tice H."/>
        </authorList>
    </citation>
    <scope>NUCLEOTIDE SEQUENCE [LARGE SCALE GENOMIC DNA]</scope>
    <source>
        <strain>Sterne</strain>
    </source>
</reference>
<comment type="function">
    <text evidence="1">Catalyzes the NADPH-dependent reduction of glutamyl-tRNA(Glu) to glutamate 1-semialdehyde (GSA).</text>
</comment>
<comment type="catalytic activity">
    <reaction evidence="1">
        <text>(S)-4-amino-5-oxopentanoate + tRNA(Glu) + NADP(+) = L-glutamyl-tRNA(Glu) + NADPH + H(+)</text>
        <dbReference type="Rhea" id="RHEA:12344"/>
        <dbReference type="Rhea" id="RHEA-COMP:9663"/>
        <dbReference type="Rhea" id="RHEA-COMP:9680"/>
        <dbReference type="ChEBI" id="CHEBI:15378"/>
        <dbReference type="ChEBI" id="CHEBI:57501"/>
        <dbReference type="ChEBI" id="CHEBI:57783"/>
        <dbReference type="ChEBI" id="CHEBI:58349"/>
        <dbReference type="ChEBI" id="CHEBI:78442"/>
        <dbReference type="ChEBI" id="CHEBI:78520"/>
        <dbReference type="EC" id="1.2.1.70"/>
    </reaction>
</comment>
<comment type="pathway">
    <text evidence="1">Porphyrin-containing compound metabolism; protoporphyrin-IX biosynthesis; 5-aminolevulinate from L-glutamyl-tRNA(Glu): step 1/2.</text>
</comment>
<comment type="subunit">
    <text evidence="1">Homodimer.</text>
</comment>
<comment type="domain">
    <text evidence="1">Possesses an unusual extended V-shaped dimeric structure with each monomer consisting of three distinct domains arranged along a curved 'spinal' alpha-helix. The N-terminal catalytic domain specifically recognizes the glutamate moiety of the substrate. The second domain is the NADPH-binding domain, and the third C-terminal domain is responsible for dimerization.</text>
</comment>
<comment type="miscellaneous">
    <text evidence="1">During catalysis, the active site Cys acts as a nucleophile attacking the alpha-carbonyl group of tRNA-bound glutamate with the formation of a thioester intermediate between enzyme and glutamate, and the concomitant release of tRNA(Glu). The thioester intermediate is finally reduced by direct hydride transfer from NADPH, to form the product GSA.</text>
</comment>
<comment type="similarity">
    <text evidence="1">Belongs to the glutamyl-tRNA reductase family.</text>
</comment>
<feature type="chain" id="PRO_0000113988" description="Glutamyl-tRNA reductase">
    <location>
        <begin position="1"/>
        <end position="444"/>
    </location>
</feature>
<feature type="active site" description="Nucleophile" evidence="1">
    <location>
        <position position="50"/>
    </location>
</feature>
<feature type="binding site" evidence="1">
    <location>
        <begin position="49"/>
        <end position="52"/>
    </location>
    <ligand>
        <name>substrate</name>
    </ligand>
</feature>
<feature type="binding site" evidence="1">
    <location>
        <position position="109"/>
    </location>
    <ligand>
        <name>substrate</name>
    </ligand>
</feature>
<feature type="binding site" evidence="1">
    <location>
        <begin position="114"/>
        <end position="116"/>
    </location>
    <ligand>
        <name>substrate</name>
    </ligand>
</feature>
<feature type="binding site" evidence="1">
    <location>
        <position position="120"/>
    </location>
    <ligand>
        <name>substrate</name>
    </ligand>
</feature>
<feature type="binding site" evidence="1">
    <location>
        <begin position="189"/>
        <end position="194"/>
    </location>
    <ligand>
        <name>NADP(+)</name>
        <dbReference type="ChEBI" id="CHEBI:58349"/>
    </ligand>
</feature>
<feature type="site" description="Important for activity" evidence="1">
    <location>
        <position position="99"/>
    </location>
</feature>
<keyword id="KW-0521">NADP</keyword>
<keyword id="KW-0560">Oxidoreductase</keyword>
<keyword id="KW-0627">Porphyrin biosynthesis</keyword>
<keyword id="KW-1185">Reference proteome</keyword>